<evidence type="ECO:0000255" key="1">
    <source>
        <dbReference type="HAMAP-Rule" id="MF_01010"/>
    </source>
</evidence>
<comment type="function">
    <text evidence="1">Catalyzes the formation of 5-methyl-uridine at position 1939 (m5U1939) in 23S rRNA.</text>
</comment>
<comment type="catalytic activity">
    <reaction evidence="1">
        <text>uridine(1939) in 23S rRNA + S-adenosyl-L-methionine = 5-methyluridine(1939) in 23S rRNA + S-adenosyl-L-homocysteine + H(+)</text>
        <dbReference type="Rhea" id="RHEA:42908"/>
        <dbReference type="Rhea" id="RHEA-COMP:10278"/>
        <dbReference type="Rhea" id="RHEA-COMP:10279"/>
        <dbReference type="ChEBI" id="CHEBI:15378"/>
        <dbReference type="ChEBI" id="CHEBI:57856"/>
        <dbReference type="ChEBI" id="CHEBI:59789"/>
        <dbReference type="ChEBI" id="CHEBI:65315"/>
        <dbReference type="ChEBI" id="CHEBI:74447"/>
        <dbReference type="EC" id="2.1.1.190"/>
    </reaction>
</comment>
<comment type="similarity">
    <text evidence="1">Belongs to the class I-like SAM-binding methyltransferase superfamily. RNA M5U methyltransferase family. RlmD subfamily.</text>
</comment>
<sequence length="455" mass="49796">MAQFFQAKPNKSKQLSAKLSLSVTQLDHLGAGIAQHQGKIVFIPGVLPGETATVQFVEQKKSYAKAKLISIESASVNRIKPHCPHYQQCGGCDLQHMDTNAQREHKQTALVDLISKLSSAKAIDADIVADPIVGEAWHYRRRARLATLFDKNTQRLQLGFRAGNSNKIVSIQQCPVLSESLSALITPLAANLNQLKAKASLGHVELTQADNGNFAVLRVTKVLPASDIRWLTGFAEKHQLNLLLQDDAGQLTQLFPLLPAGDEAIALPYYHLAQEAVRCSFTPGNFVQVNGAINQAMVDQAIEWLDPQSGERILDLFCGVGNFSLPLALKAAEVIGVEGVPEMVQQAKQNAIDNQLDNVTFYHADLSADLSTQTWLGKIDKLLLDPARAGAFESLQWLQKMQPKKVVYVSCNPASLARDSSVLLASGYRIAQVGLVDMFPQTHHIEAMVLFELNI</sequence>
<accession>Q086B4</accession>
<proteinExistence type="inferred from homology"/>
<organism>
    <name type="scientific">Shewanella frigidimarina (strain NCIMB 400)</name>
    <dbReference type="NCBI Taxonomy" id="318167"/>
    <lineage>
        <taxon>Bacteria</taxon>
        <taxon>Pseudomonadati</taxon>
        <taxon>Pseudomonadota</taxon>
        <taxon>Gammaproteobacteria</taxon>
        <taxon>Alteromonadales</taxon>
        <taxon>Shewanellaceae</taxon>
        <taxon>Shewanella</taxon>
    </lineage>
</organism>
<feature type="chain" id="PRO_0000282062" description="23S rRNA (uracil(1939)-C(5))-methyltransferase RlmD">
    <location>
        <begin position="1"/>
        <end position="455"/>
    </location>
</feature>
<feature type="domain" description="TRAM" evidence="1">
    <location>
        <begin position="12"/>
        <end position="70"/>
    </location>
</feature>
<feature type="active site" description="Nucleophile" evidence="1">
    <location>
        <position position="411"/>
    </location>
</feature>
<feature type="binding site" evidence="1">
    <location>
        <position position="83"/>
    </location>
    <ligand>
        <name>[4Fe-4S] cluster</name>
        <dbReference type="ChEBI" id="CHEBI:49883"/>
    </ligand>
</feature>
<feature type="binding site" evidence="1">
    <location>
        <position position="89"/>
    </location>
    <ligand>
        <name>[4Fe-4S] cluster</name>
        <dbReference type="ChEBI" id="CHEBI:49883"/>
    </ligand>
</feature>
<feature type="binding site" evidence="1">
    <location>
        <position position="92"/>
    </location>
    <ligand>
        <name>[4Fe-4S] cluster</name>
        <dbReference type="ChEBI" id="CHEBI:49883"/>
    </ligand>
</feature>
<feature type="binding site" evidence="1">
    <location>
        <position position="174"/>
    </location>
    <ligand>
        <name>[4Fe-4S] cluster</name>
        <dbReference type="ChEBI" id="CHEBI:49883"/>
    </ligand>
</feature>
<feature type="binding site" evidence="1">
    <location>
        <position position="288"/>
    </location>
    <ligand>
        <name>S-adenosyl-L-methionine</name>
        <dbReference type="ChEBI" id="CHEBI:59789"/>
    </ligand>
</feature>
<feature type="binding site" evidence="1">
    <location>
        <position position="317"/>
    </location>
    <ligand>
        <name>S-adenosyl-L-methionine</name>
        <dbReference type="ChEBI" id="CHEBI:59789"/>
    </ligand>
</feature>
<feature type="binding site" evidence="1">
    <location>
        <position position="322"/>
    </location>
    <ligand>
        <name>S-adenosyl-L-methionine</name>
        <dbReference type="ChEBI" id="CHEBI:59789"/>
    </ligand>
</feature>
<feature type="binding site" evidence="1">
    <location>
        <position position="338"/>
    </location>
    <ligand>
        <name>S-adenosyl-L-methionine</name>
        <dbReference type="ChEBI" id="CHEBI:59789"/>
    </ligand>
</feature>
<feature type="binding site" evidence="1">
    <location>
        <position position="365"/>
    </location>
    <ligand>
        <name>S-adenosyl-L-methionine</name>
        <dbReference type="ChEBI" id="CHEBI:59789"/>
    </ligand>
</feature>
<feature type="binding site" evidence="1">
    <location>
        <position position="385"/>
    </location>
    <ligand>
        <name>S-adenosyl-L-methionine</name>
        <dbReference type="ChEBI" id="CHEBI:59789"/>
    </ligand>
</feature>
<keyword id="KW-0004">4Fe-4S</keyword>
<keyword id="KW-0408">Iron</keyword>
<keyword id="KW-0411">Iron-sulfur</keyword>
<keyword id="KW-0479">Metal-binding</keyword>
<keyword id="KW-0489">Methyltransferase</keyword>
<keyword id="KW-1185">Reference proteome</keyword>
<keyword id="KW-0698">rRNA processing</keyword>
<keyword id="KW-0949">S-adenosyl-L-methionine</keyword>
<keyword id="KW-0808">Transferase</keyword>
<reference key="1">
    <citation type="submission" date="2006-08" db="EMBL/GenBank/DDBJ databases">
        <title>Complete sequence of Shewanella frigidimarina NCIMB 400.</title>
        <authorList>
            <consortium name="US DOE Joint Genome Institute"/>
            <person name="Copeland A."/>
            <person name="Lucas S."/>
            <person name="Lapidus A."/>
            <person name="Barry K."/>
            <person name="Detter J.C."/>
            <person name="Glavina del Rio T."/>
            <person name="Hammon N."/>
            <person name="Israni S."/>
            <person name="Dalin E."/>
            <person name="Tice H."/>
            <person name="Pitluck S."/>
            <person name="Fredrickson J.K."/>
            <person name="Kolker E."/>
            <person name="McCuel L.A."/>
            <person name="DiChristina T."/>
            <person name="Nealson K.H."/>
            <person name="Newman D."/>
            <person name="Tiedje J.M."/>
            <person name="Zhou J."/>
            <person name="Romine M.F."/>
            <person name="Culley D.E."/>
            <person name="Serres M."/>
            <person name="Chertkov O."/>
            <person name="Brettin T."/>
            <person name="Bruce D."/>
            <person name="Han C."/>
            <person name="Tapia R."/>
            <person name="Gilna P."/>
            <person name="Schmutz J."/>
            <person name="Larimer F."/>
            <person name="Land M."/>
            <person name="Hauser L."/>
            <person name="Kyrpides N."/>
            <person name="Mikhailova N."/>
            <person name="Richardson P."/>
        </authorList>
    </citation>
    <scope>NUCLEOTIDE SEQUENCE [LARGE SCALE GENOMIC DNA]</scope>
    <source>
        <strain>NCIMB 400</strain>
    </source>
</reference>
<dbReference type="EC" id="2.1.1.190" evidence="1"/>
<dbReference type="EMBL" id="CP000447">
    <property type="protein sequence ID" value="ABI70901.1"/>
    <property type="molecule type" value="Genomic_DNA"/>
</dbReference>
<dbReference type="RefSeq" id="WP_011636522.1">
    <property type="nucleotide sequence ID" value="NC_008345.1"/>
</dbReference>
<dbReference type="SMR" id="Q086B4"/>
<dbReference type="STRING" id="318167.Sfri_1048"/>
<dbReference type="KEGG" id="sfr:Sfri_1048"/>
<dbReference type="eggNOG" id="COG2265">
    <property type="taxonomic scope" value="Bacteria"/>
</dbReference>
<dbReference type="HOGENOM" id="CLU_014689_8_2_6"/>
<dbReference type="OrthoDB" id="9804590at2"/>
<dbReference type="Proteomes" id="UP000000684">
    <property type="component" value="Chromosome"/>
</dbReference>
<dbReference type="GO" id="GO:0051539">
    <property type="term" value="F:4 iron, 4 sulfur cluster binding"/>
    <property type="evidence" value="ECO:0007669"/>
    <property type="project" value="UniProtKB-KW"/>
</dbReference>
<dbReference type="GO" id="GO:0005506">
    <property type="term" value="F:iron ion binding"/>
    <property type="evidence" value="ECO:0007669"/>
    <property type="project" value="UniProtKB-UniRule"/>
</dbReference>
<dbReference type="GO" id="GO:0003723">
    <property type="term" value="F:RNA binding"/>
    <property type="evidence" value="ECO:0007669"/>
    <property type="project" value="InterPro"/>
</dbReference>
<dbReference type="GO" id="GO:0070041">
    <property type="term" value="F:rRNA (uridine-C5-)-methyltransferase activity"/>
    <property type="evidence" value="ECO:0007669"/>
    <property type="project" value="UniProtKB-UniRule"/>
</dbReference>
<dbReference type="GO" id="GO:0070475">
    <property type="term" value="P:rRNA base methylation"/>
    <property type="evidence" value="ECO:0007669"/>
    <property type="project" value="TreeGrafter"/>
</dbReference>
<dbReference type="CDD" id="cd02440">
    <property type="entry name" value="AdoMet_MTases"/>
    <property type="match status" value="1"/>
</dbReference>
<dbReference type="FunFam" id="3.40.50.150:FF:000009">
    <property type="entry name" value="23S rRNA (Uracil(1939)-C(5))-methyltransferase RlmD"/>
    <property type="match status" value="1"/>
</dbReference>
<dbReference type="FunFam" id="2.40.50.140:FF:000097">
    <property type="entry name" value="23S rRNA (uracil(1939)-C(5))-methyltransferase RlmD"/>
    <property type="match status" value="1"/>
</dbReference>
<dbReference type="Gene3D" id="2.40.50.1070">
    <property type="match status" value="1"/>
</dbReference>
<dbReference type="Gene3D" id="2.40.50.140">
    <property type="entry name" value="Nucleic acid-binding proteins"/>
    <property type="match status" value="1"/>
</dbReference>
<dbReference type="Gene3D" id="3.40.50.150">
    <property type="entry name" value="Vaccinia Virus protein VP39"/>
    <property type="match status" value="1"/>
</dbReference>
<dbReference type="HAMAP" id="MF_01010">
    <property type="entry name" value="23SrRNA_methyltr_RlmD"/>
    <property type="match status" value="1"/>
</dbReference>
<dbReference type="InterPro" id="IPR001566">
    <property type="entry name" value="23S_rRNA_MeTrfase_RlmD"/>
</dbReference>
<dbReference type="InterPro" id="IPR030390">
    <property type="entry name" value="MeTrfase_TrmA_AS"/>
</dbReference>
<dbReference type="InterPro" id="IPR030391">
    <property type="entry name" value="MeTrfase_TrmA_CS"/>
</dbReference>
<dbReference type="InterPro" id="IPR012340">
    <property type="entry name" value="NA-bd_OB-fold"/>
</dbReference>
<dbReference type="InterPro" id="IPR029063">
    <property type="entry name" value="SAM-dependent_MTases_sf"/>
</dbReference>
<dbReference type="InterPro" id="IPR002792">
    <property type="entry name" value="TRAM_dom"/>
</dbReference>
<dbReference type="InterPro" id="IPR010280">
    <property type="entry name" value="U5_MeTrfase_fam"/>
</dbReference>
<dbReference type="NCBIfam" id="NF009639">
    <property type="entry name" value="PRK13168.1"/>
    <property type="match status" value="1"/>
</dbReference>
<dbReference type="NCBIfam" id="TIGR00479">
    <property type="entry name" value="rumA"/>
    <property type="match status" value="1"/>
</dbReference>
<dbReference type="PANTHER" id="PTHR11061:SF49">
    <property type="entry name" value="23S RRNA (URACIL(1939)-C(5))-METHYLTRANSFERASE RLMD"/>
    <property type="match status" value="1"/>
</dbReference>
<dbReference type="PANTHER" id="PTHR11061">
    <property type="entry name" value="RNA M5U METHYLTRANSFERASE"/>
    <property type="match status" value="1"/>
</dbReference>
<dbReference type="Pfam" id="PF01938">
    <property type="entry name" value="TRAM"/>
    <property type="match status" value="1"/>
</dbReference>
<dbReference type="Pfam" id="PF05958">
    <property type="entry name" value="tRNA_U5-meth_tr"/>
    <property type="match status" value="1"/>
</dbReference>
<dbReference type="SUPFAM" id="SSF50249">
    <property type="entry name" value="Nucleic acid-binding proteins"/>
    <property type="match status" value="1"/>
</dbReference>
<dbReference type="SUPFAM" id="SSF53335">
    <property type="entry name" value="S-adenosyl-L-methionine-dependent methyltransferases"/>
    <property type="match status" value="1"/>
</dbReference>
<dbReference type="PROSITE" id="PS51687">
    <property type="entry name" value="SAM_MT_RNA_M5U"/>
    <property type="match status" value="1"/>
</dbReference>
<dbReference type="PROSITE" id="PS50926">
    <property type="entry name" value="TRAM"/>
    <property type="match status" value="1"/>
</dbReference>
<dbReference type="PROSITE" id="PS01230">
    <property type="entry name" value="TRMA_1"/>
    <property type="match status" value="1"/>
</dbReference>
<dbReference type="PROSITE" id="PS01231">
    <property type="entry name" value="TRMA_2"/>
    <property type="match status" value="1"/>
</dbReference>
<protein>
    <recommendedName>
        <fullName evidence="1">23S rRNA (uracil(1939)-C(5))-methyltransferase RlmD</fullName>
        <ecNumber evidence="1">2.1.1.190</ecNumber>
    </recommendedName>
    <alternativeName>
        <fullName evidence="1">23S rRNA(m5U1939)-methyltransferase</fullName>
    </alternativeName>
</protein>
<gene>
    <name evidence="1" type="primary">rlmD</name>
    <name type="synonym">rumA</name>
    <name type="ordered locus">Sfri_1048</name>
</gene>
<name>RLMD_SHEFN</name>